<keyword id="KW-0131">Cell cycle</keyword>
<keyword id="KW-0132">Cell division</keyword>
<keyword id="KW-0997">Cell inner membrane</keyword>
<keyword id="KW-1003">Cell membrane</keyword>
<keyword id="KW-0133">Cell shape</keyword>
<keyword id="KW-0961">Cell wall biogenesis/degradation</keyword>
<keyword id="KW-0460">Magnesium</keyword>
<keyword id="KW-0472">Membrane</keyword>
<keyword id="KW-0479">Metal-binding</keyword>
<keyword id="KW-0573">Peptidoglycan synthesis</keyword>
<keyword id="KW-1185">Reference proteome</keyword>
<keyword id="KW-0808">Transferase</keyword>
<keyword id="KW-0812">Transmembrane</keyword>
<keyword id="KW-1133">Transmembrane helix</keyword>
<feature type="chain" id="PRO_0000108929" description="Phospho-N-acetylmuramoyl-pentapeptide-transferase">
    <location>
        <begin position="1"/>
        <end position="352"/>
    </location>
</feature>
<feature type="transmembrane region" description="Helical" evidence="1">
    <location>
        <begin position="16"/>
        <end position="36"/>
    </location>
</feature>
<feature type="transmembrane region" description="Helical" evidence="1">
    <location>
        <begin position="66"/>
        <end position="86"/>
    </location>
</feature>
<feature type="transmembrane region" description="Helical" evidence="1">
    <location>
        <begin position="88"/>
        <end position="108"/>
    </location>
</feature>
<feature type="transmembrane region" description="Helical" evidence="1">
    <location>
        <begin position="129"/>
        <end position="149"/>
    </location>
</feature>
<feature type="transmembrane region" description="Helical" evidence="1">
    <location>
        <begin position="160"/>
        <end position="180"/>
    </location>
</feature>
<feature type="transmembrane region" description="Helical" evidence="1">
    <location>
        <begin position="191"/>
        <end position="211"/>
    </location>
</feature>
<feature type="transmembrane region" description="Helical" evidence="1">
    <location>
        <begin position="228"/>
        <end position="248"/>
    </location>
</feature>
<feature type="transmembrane region" description="Helical" evidence="1">
    <location>
        <begin position="255"/>
        <end position="275"/>
    </location>
</feature>
<feature type="transmembrane region" description="Helical" evidence="1">
    <location>
        <begin position="280"/>
        <end position="300"/>
    </location>
</feature>
<feature type="transmembrane region" description="Helical" evidence="1">
    <location>
        <begin position="329"/>
        <end position="349"/>
    </location>
</feature>
<protein>
    <recommendedName>
        <fullName evidence="1">Phospho-N-acetylmuramoyl-pentapeptide-transferase</fullName>
        <ecNumber evidence="1">2.7.8.13</ecNumber>
    </recommendedName>
    <alternativeName>
        <fullName evidence="1">UDP-MurNAc-pentapeptide phosphotransferase</fullName>
    </alternativeName>
</protein>
<comment type="function">
    <text evidence="1">Catalyzes the initial step of the lipid cycle reactions in the biosynthesis of the cell wall peptidoglycan: transfers peptidoglycan precursor phospho-MurNAc-pentapeptide from UDP-MurNAc-pentapeptide onto the lipid carrier undecaprenyl phosphate, yielding undecaprenyl-pyrophosphoryl-MurNAc-pentapeptide, known as lipid I.</text>
</comment>
<comment type="catalytic activity">
    <reaction evidence="1">
        <text>UDP-N-acetyl-alpha-D-muramoyl-L-alanyl-gamma-D-glutamyl-meso-2,6-diaminopimeloyl-D-alanyl-D-alanine + di-trans,octa-cis-undecaprenyl phosphate = di-trans,octa-cis-undecaprenyl diphospho-N-acetyl-alpha-D-muramoyl-L-alanyl-D-glutamyl-meso-2,6-diaminopimeloyl-D-alanyl-D-alanine + UMP</text>
        <dbReference type="Rhea" id="RHEA:28386"/>
        <dbReference type="ChEBI" id="CHEBI:57865"/>
        <dbReference type="ChEBI" id="CHEBI:60392"/>
        <dbReference type="ChEBI" id="CHEBI:61386"/>
        <dbReference type="ChEBI" id="CHEBI:61387"/>
        <dbReference type="EC" id="2.7.8.13"/>
    </reaction>
</comment>
<comment type="cofactor">
    <cofactor evidence="1">
        <name>Mg(2+)</name>
        <dbReference type="ChEBI" id="CHEBI:18420"/>
    </cofactor>
</comment>
<comment type="pathway">
    <text evidence="1">Cell wall biogenesis; peptidoglycan biosynthesis.</text>
</comment>
<comment type="subcellular location">
    <subcellularLocation>
        <location evidence="1">Cell inner membrane</location>
        <topology evidence="1">Multi-pass membrane protein</topology>
    </subcellularLocation>
</comment>
<comment type="similarity">
    <text evidence="1">Belongs to the glycosyltransferase 4 family. MraY subfamily.</text>
</comment>
<organism>
    <name type="scientific">Wolinella succinogenes (strain ATCC 29543 / DSM 1740 / CCUG 13145 / JCM 31913 / LMG 7466 / NCTC 11488 / FDC 602W)</name>
    <name type="common">Vibrio succinogenes</name>
    <dbReference type="NCBI Taxonomy" id="273121"/>
    <lineage>
        <taxon>Bacteria</taxon>
        <taxon>Pseudomonadati</taxon>
        <taxon>Campylobacterota</taxon>
        <taxon>Epsilonproteobacteria</taxon>
        <taxon>Campylobacterales</taxon>
        <taxon>Helicobacteraceae</taxon>
        <taxon>Wolinella</taxon>
    </lineage>
</organism>
<gene>
    <name evidence="1" type="primary">mraY</name>
    <name type="ordered locus">WS2038</name>
</gene>
<dbReference type="EC" id="2.7.8.13" evidence="1"/>
<dbReference type="EMBL" id="BX571662">
    <property type="protein sequence ID" value="CAE11038.1"/>
    <property type="molecule type" value="Genomic_DNA"/>
</dbReference>
<dbReference type="RefSeq" id="WP_011139820.1">
    <property type="nucleotide sequence ID" value="NC_005090.1"/>
</dbReference>
<dbReference type="SMR" id="Q7M7X0"/>
<dbReference type="STRING" id="273121.WS2038"/>
<dbReference type="KEGG" id="wsu:WS2038"/>
<dbReference type="eggNOG" id="COG0472">
    <property type="taxonomic scope" value="Bacteria"/>
</dbReference>
<dbReference type="HOGENOM" id="CLU_023982_0_0_7"/>
<dbReference type="UniPathway" id="UPA00219"/>
<dbReference type="Proteomes" id="UP000000422">
    <property type="component" value="Chromosome"/>
</dbReference>
<dbReference type="GO" id="GO:0005886">
    <property type="term" value="C:plasma membrane"/>
    <property type="evidence" value="ECO:0007669"/>
    <property type="project" value="UniProtKB-SubCell"/>
</dbReference>
<dbReference type="GO" id="GO:0046872">
    <property type="term" value="F:metal ion binding"/>
    <property type="evidence" value="ECO:0007669"/>
    <property type="project" value="UniProtKB-KW"/>
</dbReference>
<dbReference type="GO" id="GO:0008963">
    <property type="term" value="F:phospho-N-acetylmuramoyl-pentapeptide-transferase activity"/>
    <property type="evidence" value="ECO:0007669"/>
    <property type="project" value="UniProtKB-UniRule"/>
</dbReference>
<dbReference type="GO" id="GO:0051992">
    <property type="term" value="F:UDP-N-acetylmuramoyl-L-alanyl-D-glutamyl-meso-2,6-diaminopimelyl-D-alanyl-D-alanine:undecaprenyl-phosphate transferase activity"/>
    <property type="evidence" value="ECO:0007669"/>
    <property type="project" value="RHEA"/>
</dbReference>
<dbReference type="GO" id="GO:0051301">
    <property type="term" value="P:cell division"/>
    <property type="evidence" value="ECO:0007669"/>
    <property type="project" value="UniProtKB-KW"/>
</dbReference>
<dbReference type="GO" id="GO:0071555">
    <property type="term" value="P:cell wall organization"/>
    <property type="evidence" value="ECO:0007669"/>
    <property type="project" value="UniProtKB-KW"/>
</dbReference>
<dbReference type="GO" id="GO:0009252">
    <property type="term" value="P:peptidoglycan biosynthetic process"/>
    <property type="evidence" value="ECO:0007669"/>
    <property type="project" value="UniProtKB-UniRule"/>
</dbReference>
<dbReference type="GO" id="GO:0008360">
    <property type="term" value="P:regulation of cell shape"/>
    <property type="evidence" value="ECO:0007669"/>
    <property type="project" value="UniProtKB-KW"/>
</dbReference>
<dbReference type="CDD" id="cd06852">
    <property type="entry name" value="GT_MraY"/>
    <property type="match status" value="1"/>
</dbReference>
<dbReference type="HAMAP" id="MF_00038">
    <property type="entry name" value="MraY"/>
    <property type="match status" value="1"/>
</dbReference>
<dbReference type="InterPro" id="IPR000715">
    <property type="entry name" value="Glycosyl_transferase_4"/>
</dbReference>
<dbReference type="InterPro" id="IPR003524">
    <property type="entry name" value="PNAcMuramoyl-5peptid_Trfase"/>
</dbReference>
<dbReference type="InterPro" id="IPR018480">
    <property type="entry name" value="PNAcMuramoyl-5peptid_Trfase_CS"/>
</dbReference>
<dbReference type="NCBIfam" id="TIGR00445">
    <property type="entry name" value="mraY"/>
    <property type="match status" value="1"/>
</dbReference>
<dbReference type="PANTHER" id="PTHR22926">
    <property type="entry name" value="PHOSPHO-N-ACETYLMURAMOYL-PENTAPEPTIDE-TRANSFERASE"/>
    <property type="match status" value="1"/>
</dbReference>
<dbReference type="PANTHER" id="PTHR22926:SF5">
    <property type="entry name" value="PHOSPHO-N-ACETYLMURAMOYL-PENTAPEPTIDE-TRANSFERASE HOMOLOG"/>
    <property type="match status" value="1"/>
</dbReference>
<dbReference type="Pfam" id="PF00953">
    <property type="entry name" value="Glycos_transf_4"/>
    <property type="match status" value="1"/>
</dbReference>
<dbReference type="Pfam" id="PF10555">
    <property type="entry name" value="MraY_sig1"/>
    <property type="match status" value="1"/>
</dbReference>
<dbReference type="PROSITE" id="PS01347">
    <property type="entry name" value="MRAY_1"/>
    <property type="match status" value="1"/>
</dbReference>
<dbReference type="PROSITE" id="PS01348">
    <property type="entry name" value="MRAY_2"/>
    <property type="match status" value="1"/>
</dbReference>
<proteinExistence type="inferred from homology"/>
<sequence length="352" mass="38438">MMYYLYSHAGINIFQYITFRAGAAFFIAFFLALLFMPRFIQWARNQKAAQPISEFAPQGHRGKANTPTMGGLVFIGATLLASLLCAKLNNLYVLAGLAVILLFGLIGLRDDAVKVLNHSNAGLSSRVKMLYLVLAGASVSAALFYFGMEDDLYIPFNKNPLLSMGIVAILFWTLVMVATSNAVNITDGLDGLATVPSVYALVSLSVFVYIAGHAGLSSYLLWPKITDSGEAVIVSAALVGALIGFLWFNCHPAQLFMGDSGSLSIGGFIAYMAIISKNEFLLFLIGSIFVIETVSVILQIGSYKTRGKRIFLMAPIHHHFEVKGWAETKIIVRFWIIALMSNIIALLTLKVR</sequence>
<evidence type="ECO:0000255" key="1">
    <source>
        <dbReference type="HAMAP-Rule" id="MF_00038"/>
    </source>
</evidence>
<name>MRAY_WOLSU</name>
<reference key="1">
    <citation type="journal article" date="2003" name="Proc. Natl. Acad. Sci. U.S.A.">
        <title>Complete genome sequence and analysis of Wolinella succinogenes.</title>
        <authorList>
            <person name="Baar C."/>
            <person name="Eppinger M."/>
            <person name="Raddatz G."/>
            <person name="Simon J."/>
            <person name="Lanz C."/>
            <person name="Klimmek O."/>
            <person name="Nandakumar R."/>
            <person name="Gross R."/>
            <person name="Rosinus A."/>
            <person name="Keller H."/>
            <person name="Jagtap P."/>
            <person name="Linke B."/>
            <person name="Meyer F."/>
            <person name="Lederer H."/>
            <person name="Schuster S.C."/>
        </authorList>
    </citation>
    <scope>NUCLEOTIDE SEQUENCE [LARGE SCALE GENOMIC DNA]</scope>
    <source>
        <strain>ATCC 29543 / DSM 1740 / CCUG 13145 / JCM 31913 / LMG 7466 / NCTC 11488 / FDC 602W</strain>
    </source>
</reference>
<accession>Q7M7X0</accession>